<proteinExistence type="inferred from homology"/>
<evidence type="ECO:0000255" key="1">
    <source>
        <dbReference type="HAMAP-Rule" id="MF_00685"/>
    </source>
</evidence>
<sequence>MTVDPASHITIPEADLARLRHCNHHDPHGFYGWHETEAGSVIRTRQVGATQVNLLIDDTSHVMTPIGDDIFAIDLGHRERADYRLEVTWPDQEPQVKADPYYFLPTVGEMDIYLFSEGRHERLWEILGANIKTYQTALGTVRGTAFTVWAPNAIGCAVVGGFNGWNASQHPMRSMGGSGLWELFIPGIEEGEVYKFAVQTREGQRRDKADPMARRAELAPATGSIVASSEYQWQDSEWLRERSQTDLASKPMSVYEVHLGSWRWGKNYEDLATELVDYVADLGYTHVEFLPVAEHPFGGSWGYQVTGYYAPTSRWGTPDQFRALVDAFHARGIGVIMDWVPAHFPKDDWALARFDGEALYEHPDWRRGEQKDWGTLVFDFGRNEVRNFLVANALYWIEEFHIDGLRVDAVASMLYLDYSREHGEWEPNIYGGRENLEAVQFLQEMNATVLRLHPGALTIAEESTSWPGVTAPTWDGGLGFSLKWNMGWMHDTLEYFSKNPVHRAFHHSELTFSLVYAFSERFVLPISHDEVVHGKGSLWDRMPGDTWNKAAGLRTFLAYMWSHPGKKLLFMGQEFGQREEWAEGQGLPWDIVDGWQGEYHEAIRTLTRSLNGVYSDSPALHTQDFTGEGFTWNKGDDATNNILAFTRFGSDGSQMLCVFNLSGTSQPEYQLGVAAGGEWKLVLNTDDAEFLGAENDIATSVQAAATPRDNFAYSLSLHVPAMSAQFYSLQK</sequence>
<dbReference type="EC" id="2.4.1.18" evidence="1"/>
<dbReference type="EMBL" id="BA000036">
    <property type="protein sequence ID" value="BAB98617.1"/>
    <property type="molecule type" value="Genomic_DNA"/>
</dbReference>
<dbReference type="EMBL" id="BX927151">
    <property type="protein sequence ID" value="CAF19928.1"/>
    <property type="molecule type" value="Genomic_DNA"/>
</dbReference>
<dbReference type="RefSeq" id="NP_600448.1">
    <property type="nucleotide sequence ID" value="NC_003450.3"/>
</dbReference>
<dbReference type="RefSeq" id="WP_011014214.1">
    <property type="nucleotide sequence ID" value="NC_006958.1"/>
</dbReference>
<dbReference type="SMR" id="Q8NR40"/>
<dbReference type="STRING" id="196627.cg1381"/>
<dbReference type="CAZy" id="CBM48">
    <property type="family name" value="Carbohydrate-Binding Module Family 48"/>
</dbReference>
<dbReference type="CAZy" id="GH13">
    <property type="family name" value="Glycoside Hydrolase Family 13"/>
</dbReference>
<dbReference type="DNASU" id="3344821"/>
<dbReference type="GeneID" id="1019207"/>
<dbReference type="KEGG" id="cgb:cg1381"/>
<dbReference type="KEGG" id="cgl:Cgl1224"/>
<dbReference type="PATRIC" id="fig|196627.13.peg.1204"/>
<dbReference type="eggNOG" id="COG0296">
    <property type="taxonomic scope" value="Bacteria"/>
</dbReference>
<dbReference type="HOGENOM" id="CLU_004245_3_2_11"/>
<dbReference type="OrthoDB" id="9800174at2"/>
<dbReference type="BioCyc" id="CORYNE:G18NG-10797-MONOMER"/>
<dbReference type="UniPathway" id="UPA00164"/>
<dbReference type="Proteomes" id="UP000000582">
    <property type="component" value="Chromosome"/>
</dbReference>
<dbReference type="Proteomes" id="UP000001009">
    <property type="component" value="Chromosome"/>
</dbReference>
<dbReference type="GO" id="GO:0005829">
    <property type="term" value="C:cytosol"/>
    <property type="evidence" value="ECO:0007669"/>
    <property type="project" value="TreeGrafter"/>
</dbReference>
<dbReference type="GO" id="GO:0003844">
    <property type="term" value="F:1,4-alpha-glucan branching enzyme activity"/>
    <property type="evidence" value="ECO:0007669"/>
    <property type="project" value="UniProtKB-UniRule"/>
</dbReference>
<dbReference type="GO" id="GO:0043169">
    <property type="term" value="F:cation binding"/>
    <property type="evidence" value="ECO:0007669"/>
    <property type="project" value="InterPro"/>
</dbReference>
<dbReference type="GO" id="GO:0004553">
    <property type="term" value="F:hydrolase activity, hydrolyzing O-glycosyl compounds"/>
    <property type="evidence" value="ECO:0007669"/>
    <property type="project" value="InterPro"/>
</dbReference>
<dbReference type="GO" id="GO:0005978">
    <property type="term" value="P:glycogen biosynthetic process"/>
    <property type="evidence" value="ECO:0007669"/>
    <property type="project" value="UniProtKB-UniRule"/>
</dbReference>
<dbReference type="CDD" id="cd11322">
    <property type="entry name" value="AmyAc_Glg_BE"/>
    <property type="match status" value="1"/>
</dbReference>
<dbReference type="CDD" id="cd02855">
    <property type="entry name" value="E_set_GBE_prok_N"/>
    <property type="match status" value="1"/>
</dbReference>
<dbReference type="FunFam" id="2.60.40.10:FF:000169">
    <property type="entry name" value="1,4-alpha-glucan branching enzyme GlgB"/>
    <property type="match status" value="1"/>
</dbReference>
<dbReference type="FunFam" id="3.20.20.80:FF:000003">
    <property type="entry name" value="1,4-alpha-glucan branching enzyme GlgB"/>
    <property type="match status" value="1"/>
</dbReference>
<dbReference type="Gene3D" id="3.20.20.80">
    <property type="entry name" value="Glycosidases"/>
    <property type="match status" value="1"/>
</dbReference>
<dbReference type="Gene3D" id="2.60.40.1180">
    <property type="entry name" value="Golgi alpha-mannosidase II"/>
    <property type="match status" value="1"/>
</dbReference>
<dbReference type="Gene3D" id="2.60.40.10">
    <property type="entry name" value="Immunoglobulins"/>
    <property type="match status" value="2"/>
</dbReference>
<dbReference type="HAMAP" id="MF_00685">
    <property type="entry name" value="GlgB"/>
    <property type="match status" value="1"/>
</dbReference>
<dbReference type="InterPro" id="IPR006048">
    <property type="entry name" value="A-amylase/branching_C"/>
</dbReference>
<dbReference type="InterPro" id="IPR037439">
    <property type="entry name" value="Branching_enzy"/>
</dbReference>
<dbReference type="InterPro" id="IPR006407">
    <property type="entry name" value="GlgB"/>
</dbReference>
<dbReference type="InterPro" id="IPR054169">
    <property type="entry name" value="GlgB_N"/>
</dbReference>
<dbReference type="InterPro" id="IPR044143">
    <property type="entry name" value="GlgB_N_E_set_prok"/>
</dbReference>
<dbReference type="InterPro" id="IPR006047">
    <property type="entry name" value="Glyco_hydro_13_cat_dom"/>
</dbReference>
<dbReference type="InterPro" id="IPR004193">
    <property type="entry name" value="Glyco_hydro_13_N"/>
</dbReference>
<dbReference type="InterPro" id="IPR013780">
    <property type="entry name" value="Glyco_hydro_b"/>
</dbReference>
<dbReference type="InterPro" id="IPR017853">
    <property type="entry name" value="Glycoside_hydrolase_SF"/>
</dbReference>
<dbReference type="InterPro" id="IPR013783">
    <property type="entry name" value="Ig-like_fold"/>
</dbReference>
<dbReference type="InterPro" id="IPR014756">
    <property type="entry name" value="Ig_E-set"/>
</dbReference>
<dbReference type="NCBIfam" id="TIGR01515">
    <property type="entry name" value="branching_enzym"/>
    <property type="match status" value="1"/>
</dbReference>
<dbReference type="NCBIfam" id="NF003811">
    <property type="entry name" value="PRK05402.1"/>
    <property type="match status" value="1"/>
</dbReference>
<dbReference type="NCBIfam" id="NF008967">
    <property type="entry name" value="PRK12313.1"/>
    <property type="match status" value="1"/>
</dbReference>
<dbReference type="PANTHER" id="PTHR43651">
    <property type="entry name" value="1,4-ALPHA-GLUCAN-BRANCHING ENZYME"/>
    <property type="match status" value="1"/>
</dbReference>
<dbReference type="PANTHER" id="PTHR43651:SF3">
    <property type="entry name" value="1,4-ALPHA-GLUCAN-BRANCHING ENZYME"/>
    <property type="match status" value="1"/>
</dbReference>
<dbReference type="Pfam" id="PF00128">
    <property type="entry name" value="Alpha-amylase"/>
    <property type="match status" value="2"/>
</dbReference>
<dbReference type="Pfam" id="PF02806">
    <property type="entry name" value="Alpha-amylase_C"/>
    <property type="match status" value="1"/>
</dbReference>
<dbReference type="Pfam" id="PF02922">
    <property type="entry name" value="CBM_48"/>
    <property type="match status" value="1"/>
</dbReference>
<dbReference type="Pfam" id="PF22019">
    <property type="entry name" value="GlgB_N"/>
    <property type="match status" value="1"/>
</dbReference>
<dbReference type="PIRSF" id="PIRSF000463">
    <property type="entry name" value="GlgB"/>
    <property type="match status" value="1"/>
</dbReference>
<dbReference type="SMART" id="SM00642">
    <property type="entry name" value="Aamy"/>
    <property type="match status" value="1"/>
</dbReference>
<dbReference type="SUPFAM" id="SSF51445">
    <property type="entry name" value="(Trans)glycosidases"/>
    <property type="match status" value="1"/>
</dbReference>
<dbReference type="SUPFAM" id="SSF81296">
    <property type="entry name" value="E set domains"/>
    <property type="match status" value="2"/>
</dbReference>
<dbReference type="SUPFAM" id="SSF51011">
    <property type="entry name" value="Glycosyl hydrolase domain"/>
    <property type="match status" value="1"/>
</dbReference>
<keyword id="KW-0119">Carbohydrate metabolism</keyword>
<keyword id="KW-0320">Glycogen biosynthesis</keyword>
<keyword id="KW-0321">Glycogen metabolism</keyword>
<keyword id="KW-0328">Glycosyltransferase</keyword>
<keyword id="KW-1185">Reference proteome</keyword>
<keyword id="KW-0808">Transferase</keyword>
<organism>
    <name type="scientific">Corynebacterium glutamicum (strain ATCC 13032 / DSM 20300 / JCM 1318 / BCRC 11384 / CCUG 27702 / LMG 3730 / NBRC 12168 / NCIMB 10025 / NRRL B-2784 / 534)</name>
    <dbReference type="NCBI Taxonomy" id="196627"/>
    <lineage>
        <taxon>Bacteria</taxon>
        <taxon>Bacillati</taxon>
        <taxon>Actinomycetota</taxon>
        <taxon>Actinomycetes</taxon>
        <taxon>Mycobacteriales</taxon>
        <taxon>Corynebacteriaceae</taxon>
        <taxon>Corynebacterium</taxon>
    </lineage>
</organism>
<feature type="chain" id="PRO_0000188699" description="1,4-alpha-glucan branching enzyme GlgB">
    <location>
        <begin position="1"/>
        <end position="731"/>
    </location>
</feature>
<feature type="active site" description="Nucleophile" evidence="1">
    <location>
        <position position="408"/>
    </location>
</feature>
<feature type="active site" description="Proton donor" evidence="1">
    <location>
        <position position="461"/>
    </location>
</feature>
<gene>
    <name evidence="1" type="primary">glgB</name>
    <name type="ordered locus">Cgl1224</name>
    <name type="ordered locus">cg1381</name>
</gene>
<accession>Q8NR40</accession>
<reference key="1">
    <citation type="journal article" date="2003" name="Appl. Microbiol. Biotechnol.">
        <title>The Corynebacterium glutamicum genome: features and impacts on biotechnological processes.</title>
        <authorList>
            <person name="Ikeda M."/>
            <person name="Nakagawa S."/>
        </authorList>
    </citation>
    <scope>NUCLEOTIDE SEQUENCE [LARGE SCALE GENOMIC DNA]</scope>
    <source>
        <strain>ATCC 13032 / DSM 20300 / JCM 1318 / BCRC 11384 / CCUG 27702 / LMG 3730 / NBRC 12168 / NCIMB 10025 / NRRL B-2784 / 534</strain>
    </source>
</reference>
<reference key="2">
    <citation type="journal article" date="2003" name="J. Biotechnol.">
        <title>The complete Corynebacterium glutamicum ATCC 13032 genome sequence and its impact on the production of L-aspartate-derived amino acids and vitamins.</title>
        <authorList>
            <person name="Kalinowski J."/>
            <person name="Bathe B."/>
            <person name="Bartels D."/>
            <person name="Bischoff N."/>
            <person name="Bott M."/>
            <person name="Burkovski A."/>
            <person name="Dusch N."/>
            <person name="Eggeling L."/>
            <person name="Eikmanns B.J."/>
            <person name="Gaigalat L."/>
            <person name="Goesmann A."/>
            <person name="Hartmann M."/>
            <person name="Huthmacher K."/>
            <person name="Kraemer R."/>
            <person name="Linke B."/>
            <person name="McHardy A.C."/>
            <person name="Meyer F."/>
            <person name="Moeckel B."/>
            <person name="Pfefferle W."/>
            <person name="Puehler A."/>
            <person name="Rey D.A."/>
            <person name="Rueckert C."/>
            <person name="Rupp O."/>
            <person name="Sahm H."/>
            <person name="Wendisch V.F."/>
            <person name="Wiegraebe I."/>
            <person name="Tauch A."/>
        </authorList>
    </citation>
    <scope>NUCLEOTIDE SEQUENCE [LARGE SCALE GENOMIC DNA]</scope>
    <source>
        <strain>ATCC 13032 / DSM 20300 / JCM 1318 / BCRC 11384 / CCUG 27702 / LMG 3730 / NBRC 12168 / NCIMB 10025 / NRRL B-2784 / 534</strain>
    </source>
</reference>
<name>GLGB_CORGL</name>
<comment type="function">
    <text evidence="1">Catalyzes the formation of the alpha-1,6-glucosidic linkages in glycogen by scission of a 1,4-alpha-linked oligosaccharide from growing alpha-1,4-glucan chains and the subsequent attachment of the oligosaccharide to the alpha-1,6 position.</text>
</comment>
<comment type="catalytic activity">
    <reaction evidence="1">
        <text>Transfers a segment of a (1-&gt;4)-alpha-D-glucan chain to a primary hydroxy group in a similar glucan chain.</text>
        <dbReference type="EC" id="2.4.1.18"/>
    </reaction>
</comment>
<comment type="pathway">
    <text evidence="1">Glycan biosynthesis; glycogen biosynthesis.</text>
</comment>
<comment type="subunit">
    <text evidence="1">Monomer.</text>
</comment>
<comment type="similarity">
    <text evidence="1">Belongs to the glycosyl hydrolase 13 family. GlgB subfamily.</text>
</comment>
<protein>
    <recommendedName>
        <fullName evidence="1">1,4-alpha-glucan branching enzyme GlgB</fullName>
        <ecNumber evidence="1">2.4.1.18</ecNumber>
    </recommendedName>
    <alternativeName>
        <fullName evidence="1">1,4-alpha-D-glucan:1,4-alpha-D-glucan 6-glucosyl-transferase</fullName>
    </alternativeName>
    <alternativeName>
        <fullName evidence="1">Alpha-(1-&gt;4)-glucan branching enzyme</fullName>
    </alternativeName>
    <alternativeName>
        <fullName evidence="1">Glycogen branching enzyme</fullName>
        <shortName evidence="1">BE</shortName>
    </alternativeName>
</protein>